<comment type="function">
    <text evidence="2">Plays an essential role in transcription initiation and cap-stealing mechanism, in which cellular capped pre-mRNAs are used to generate primers for viral transcription. Binds the cap of the target pre-RNA which is subsequently cleaved after 10-13 nucleotides by PA. Plays a role in the initiation of the viral genome replication and modulates the activity of the ribonucleoprotein (RNP) complex. In addition, participates in the inhibition of type I interferon induction through interaction with the host mitochondrial antiviral signaling protein MAVS.</text>
</comment>
<comment type="subunit">
    <text evidence="2">Influenza RNA polymerase is composed of three subunits: PB1, PB2 and PA. Interacts (via N-terminus) with PB1 (via C-terminus). Interacts with nucleoprotein NP (via N-terminus). Interacts (via N-terminus) with host MAVS (via N-terminus); this interaction inhibits host innate immune response.</text>
</comment>
<comment type="subcellular location">
    <subcellularLocation>
        <location>Virion</location>
    </subcellularLocation>
    <subcellularLocation>
        <location evidence="2">Host nucleus</location>
    </subcellularLocation>
    <subcellularLocation>
        <location evidence="2">Host mitochondrion</location>
    </subcellularLocation>
</comment>
<comment type="similarity">
    <text evidence="3">Belongs to the influenza viruses PB2 family.</text>
</comment>
<evidence type="ECO:0000250" key="1"/>
<evidence type="ECO:0000250" key="2">
    <source>
        <dbReference type="UniProtKB" id="P03428"/>
    </source>
</evidence>
<evidence type="ECO:0000305" key="3"/>
<sequence>SVKKEEEVLTGNLQTLKIRVHEGYEEFTMVGRRATAILRKATRRLIQLIVSGRDEQSIAEAIIVAMVFSQEDCMIKAVRGDLNFVNRANQRLNPMHQLLRHFQKDAKVLFQNWGIEPIDNVMGMVGILPDMTPSTEMSLRGVRVSKMGVDEYSSTERVIVSIDRFLRVRDQRGNVLLSPEEVSETQGTEKLTITYSSSMMWEINGPESVLVNTYQWIIRNWETVKIQWSQDPTMLYNKMEFEPFQSLVPKAARGQYSGFVRTLFQQMRDVLGTFDTVQIIKLLPFAAAPPEQSRMQFSSLTVNVRGSGMRILVRGNSPVFNYNKATKRLTVLGKDAGALTEDPDEGTAGVESAVLRGFLILGKEDRRYGPALSINELINLAKGEKANVLIGQGDVVLVMKRKRDSS</sequence>
<reference key="1">
    <citation type="journal article" date="2002" name="Proc. Natl. Acad. Sci. U.S.A.">
        <title>Emergence of multiple genotypes of H5N1 avian influenza viruses in Hong Kong SAR.</title>
        <authorList>
            <person name="Guan Y."/>
            <person name="Peiris J.S.M."/>
            <person name="Lipatov A.S."/>
            <person name="Ellis T.M."/>
            <person name="Dyrting K.C."/>
            <person name="Krauss S."/>
            <person name="Zhang L.J."/>
            <person name="Webster R.G."/>
            <person name="Shortridge K.F."/>
        </authorList>
    </citation>
    <scope>NUCLEOTIDE SEQUENCE [GENOMIC RNA]</scope>
</reference>
<organismHost>
    <name type="scientific">Aves</name>
    <dbReference type="NCBI Taxonomy" id="8782"/>
</organismHost>
<organismHost>
    <name type="scientific">Felis catus</name>
    <name type="common">Cat</name>
    <name type="synonym">Felis silvestris catus</name>
    <dbReference type="NCBI Taxonomy" id="9685"/>
</organismHost>
<organismHost>
    <name type="scientific">Homo sapiens</name>
    <name type="common">Human</name>
    <dbReference type="NCBI Taxonomy" id="9606"/>
</organismHost>
<organismHost>
    <name type="scientific">Panthera pardus</name>
    <name type="common">Leopard</name>
    <name type="synonym">Felis pardus</name>
    <dbReference type="NCBI Taxonomy" id="9691"/>
</organismHost>
<organismHost>
    <name type="scientific">Panthera tigris</name>
    <name type="common">Tiger</name>
    <dbReference type="NCBI Taxonomy" id="9694"/>
</organismHost>
<organismHost>
    <name type="scientific">Sus scrofa</name>
    <name type="common">Pig</name>
    <dbReference type="NCBI Taxonomy" id="9823"/>
</organismHost>
<name>PB2_I01A1</name>
<organism>
    <name type="scientific">Influenza A virus (strain A/Chicken/Hong Kong/YU562/2001 H5N1 genotype B)</name>
    <dbReference type="NCBI Taxonomy" id="196426"/>
    <lineage>
        <taxon>Viruses</taxon>
        <taxon>Riboviria</taxon>
        <taxon>Orthornavirae</taxon>
        <taxon>Negarnaviricota</taxon>
        <taxon>Polyploviricotina</taxon>
        <taxon>Insthoviricetes</taxon>
        <taxon>Articulavirales</taxon>
        <taxon>Orthomyxoviridae</taxon>
        <taxon>Alphainfluenzavirus</taxon>
        <taxon>Alphainfluenzavirus influenzae</taxon>
        <taxon>Influenza A virus</taxon>
    </lineage>
</organism>
<proteinExistence type="inferred from homology"/>
<keyword id="KW-1157">Cap snatching</keyword>
<keyword id="KW-1262">Eukaryotic host gene expression shutoff by virus</keyword>
<keyword id="KW-1191">Eukaryotic host transcription shutoff by virus</keyword>
<keyword id="KW-1190">Host gene expression shutoff by virus</keyword>
<keyword id="KW-1045">Host mitochondrion</keyword>
<keyword id="KW-1048">Host nucleus</keyword>
<keyword id="KW-0945">Host-virus interaction</keyword>
<keyword id="KW-1090">Inhibition of host innate immune response by virus</keyword>
<keyword id="KW-1097">Inhibition of host MAVS by virus</keyword>
<keyword id="KW-1113">Inhibition of host RLR pathway by virus</keyword>
<keyword id="KW-1104">Inhibition of host RNA polymerase II by virus</keyword>
<keyword id="KW-0506">mRNA capping</keyword>
<keyword id="KW-0507">mRNA processing</keyword>
<keyword id="KW-0899">Viral immunoevasion</keyword>
<keyword id="KW-1195">Viral transcription</keyword>
<keyword id="KW-0946">Virion</keyword>
<dbReference type="EMBL" id="AF509144">
    <property type="protein sequence ID" value="AAO52987.1"/>
    <property type="molecule type" value="Genomic_DNA"/>
</dbReference>
<dbReference type="SMR" id="Q809Q3"/>
<dbReference type="GO" id="GO:0033650">
    <property type="term" value="C:host cell mitochondrion"/>
    <property type="evidence" value="ECO:0007669"/>
    <property type="project" value="UniProtKB-SubCell"/>
</dbReference>
<dbReference type="GO" id="GO:0042025">
    <property type="term" value="C:host cell nucleus"/>
    <property type="evidence" value="ECO:0007669"/>
    <property type="project" value="UniProtKB-SubCell"/>
</dbReference>
<dbReference type="GO" id="GO:0044423">
    <property type="term" value="C:virion component"/>
    <property type="evidence" value="ECO:0007669"/>
    <property type="project" value="UniProtKB-KW"/>
</dbReference>
<dbReference type="GO" id="GO:0003723">
    <property type="term" value="F:RNA binding"/>
    <property type="evidence" value="ECO:0007669"/>
    <property type="project" value="InterPro"/>
</dbReference>
<dbReference type="GO" id="GO:0006370">
    <property type="term" value="P:7-methylguanosine mRNA capping"/>
    <property type="evidence" value="ECO:0007669"/>
    <property type="project" value="UniProtKB-KW"/>
</dbReference>
<dbReference type="GO" id="GO:0075526">
    <property type="term" value="P:cap snatching"/>
    <property type="evidence" value="ECO:0007669"/>
    <property type="project" value="UniProtKB-KW"/>
</dbReference>
<dbReference type="GO" id="GO:0006351">
    <property type="term" value="P:DNA-templated transcription"/>
    <property type="evidence" value="ECO:0007669"/>
    <property type="project" value="InterPro"/>
</dbReference>
<dbReference type="GO" id="GO:0039545">
    <property type="term" value="P:symbiont-mediated suppression of host cytoplasmic pattern recognition receptor signaling pathway via inhibition of MAVS activity"/>
    <property type="evidence" value="ECO:0007669"/>
    <property type="project" value="UniProtKB-KW"/>
</dbReference>
<dbReference type="GO" id="GO:0039657">
    <property type="term" value="P:symbiont-mediated suppression of host gene expression"/>
    <property type="evidence" value="ECO:0007669"/>
    <property type="project" value="UniProtKB-KW"/>
</dbReference>
<dbReference type="GO" id="GO:0039523">
    <property type="term" value="P:symbiont-mediated suppression of host mRNA transcription via inhibition of RNA polymerase II activity"/>
    <property type="evidence" value="ECO:0007669"/>
    <property type="project" value="UniProtKB-KW"/>
</dbReference>
<dbReference type="Gene3D" id="3.30.30.90">
    <property type="entry name" value="Polymerase Basic Protein 2, C-terminal domain"/>
    <property type="match status" value="1"/>
</dbReference>
<dbReference type="InterPro" id="IPR049114">
    <property type="entry name" value="Flu_PB2_6th"/>
</dbReference>
<dbReference type="InterPro" id="IPR049115">
    <property type="entry name" value="Flu_PB2_C"/>
</dbReference>
<dbReference type="InterPro" id="IPR048298">
    <property type="entry name" value="Flu_PB2_CAP-bd"/>
</dbReference>
<dbReference type="InterPro" id="IPR037258">
    <property type="entry name" value="PDB2_C"/>
</dbReference>
<dbReference type="Pfam" id="PF00604">
    <property type="entry name" value="Flu_PB2_5th"/>
    <property type="match status" value="1"/>
</dbReference>
<dbReference type="Pfam" id="PF20951">
    <property type="entry name" value="Flu_PB2_6th"/>
    <property type="match status" value="1"/>
</dbReference>
<dbReference type="Pfam" id="PF20952">
    <property type="entry name" value="Flu_PB2_7th"/>
    <property type="match status" value="1"/>
</dbReference>
<dbReference type="SUPFAM" id="SSF160453">
    <property type="entry name" value="PB2 C-terminal domain-like"/>
    <property type="match status" value="1"/>
</dbReference>
<accession>Q809Q3</accession>
<protein>
    <recommendedName>
        <fullName>Polymerase basic protein 2</fullName>
    </recommendedName>
    <alternativeName>
        <fullName>RNA-directed RNA polymerase subunit P3</fullName>
    </alternativeName>
</protein>
<gene>
    <name type="primary">PB2</name>
</gene>
<feature type="chain" id="PRO_0000311145" description="Polymerase basic protein 2">
    <location>
        <begin position="1" status="less than"/>
        <end position="406" status="greater than"/>
    </location>
</feature>
<feature type="short sequence motif" description="Nuclear localization signal" evidence="1">
    <location>
        <begin position="400"/>
        <end position="403"/>
    </location>
</feature>
<feature type="non-terminal residue">
    <location>
        <position position="1"/>
    </location>
</feature>
<feature type="non-terminal residue">
    <location>
        <position position="406"/>
    </location>
</feature>